<evidence type="ECO:0000255" key="1">
    <source>
        <dbReference type="PROSITE-ProRule" id="PRU01182"/>
    </source>
</evidence>
<evidence type="ECO:0000305" key="2"/>
<accession>Q5ZSM8</accession>
<keyword id="KW-0378">Hydrolase</keyword>
<keyword id="KW-0479">Metal-binding</keyword>
<keyword id="KW-0482">Metalloprotease</keyword>
<keyword id="KW-0645">Protease</keyword>
<keyword id="KW-1185">Reference proteome</keyword>
<keyword id="KW-0862">Zinc</keyword>
<gene>
    <name type="ordered locus">lpg2489</name>
</gene>
<organism>
    <name type="scientific">Legionella pneumophila subsp. pneumophila (strain Philadelphia 1 / ATCC 33152 / DSM 7513)</name>
    <dbReference type="NCBI Taxonomy" id="272624"/>
    <lineage>
        <taxon>Bacteria</taxon>
        <taxon>Pseudomonadati</taxon>
        <taxon>Pseudomonadota</taxon>
        <taxon>Gammaproteobacteria</taxon>
        <taxon>Legionellales</taxon>
        <taxon>Legionellaceae</taxon>
        <taxon>Legionella</taxon>
    </lineage>
</organism>
<name>Y2489_LEGPH</name>
<dbReference type="EMBL" id="AE017354">
    <property type="protein sequence ID" value="AAU28549.1"/>
    <property type="molecule type" value="Genomic_DNA"/>
</dbReference>
<dbReference type="RefSeq" id="YP_096496.1">
    <property type="nucleotide sequence ID" value="NC_002942.5"/>
</dbReference>
<dbReference type="SMR" id="Q5ZSM8"/>
<dbReference type="STRING" id="272624.lpg2489"/>
<dbReference type="PaxDb" id="272624-lpg2489"/>
<dbReference type="KEGG" id="lpn:lpg2489"/>
<dbReference type="PATRIC" id="fig|272624.6.peg.2638"/>
<dbReference type="eggNOG" id="COG2003">
    <property type="taxonomic scope" value="Bacteria"/>
</dbReference>
<dbReference type="HOGENOM" id="CLU_073529_0_1_6"/>
<dbReference type="OrthoDB" id="9804482at2"/>
<dbReference type="Proteomes" id="UP000000609">
    <property type="component" value="Chromosome"/>
</dbReference>
<dbReference type="GO" id="GO:0046872">
    <property type="term" value="F:metal ion binding"/>
    <property type="evidence" value="ECO:0007669"/>
    <property type="project" value="UniProtKB-KW"/>
</dbReference>
<dbReference type="GO" id="GO:0008237">
    <property type="term" value="F:metallopeptidase activity"/>
    <property type="evidence" value="ECO:0007669"/>
    <property type="project" value="UniProtKB-KW"/>
</dbReference>
<dbReference type="GO" id="GO:0006508">
    <property type="term" value="P:proteolysis"/>
    <property type="evidence" value="ECO:0007669"/>
    <property type="project" value="UniProtKB-KW"/>
</dbReference>
<dbReference type="CDD" id="cd08071">
    <property type="entry name" value="MPN_DUF2466"/>
    <property type="match status" value="1"/>
</dbReference>
<dbReference type="Gene3D" id="3.40.140.10">
    <property type="entry name" value="Cytidine Deaminase, domain 2"/>
    <property type="match status" value="1"/>
</dbReference>
<dbReference type="InterPro" id="IPR037518">
    <property type="entry name" value="MPN"/>
</dbReference>
<dbReference type="InterPro" id="IPR025657">
    <property type="entry name" value="RadC_JAB"/>
</dbReference>
<dbReference type="InterPro" id="IPR010994">
    <property type="entry name" value="RuvA_2-like"/>
</dbReference>
<dbReference type="InterPro" id="IPR001405">
    <property type="entry name" value="UPF0758"/>
</dbReference>
<dbReference type="InterPro" id="IPR020891">
    <property type="entry name" value="UPF0758_CS"/>
</dbReference>
<dbReference type="InterPro" id="IPR046778">
    <property type="entry name" value="UPF0758_N"/>
</dbReference>
<dbReference type="NCBIfam" id="NF000642">
    <property type="entry name" value="PRK00024.1"/>
    <property type="match status" value="1"/>
</dbReference>
<dbReference type="NCBIfam" id="TIGR00608">
    <property type="entry name" value="radc"/>
    <property type="match status" value="1"/>
</dbReference>
<dbReference type="PANTHER" id="PTHR30471">
    <property type="entry name" value="DNA REPAIR PROTEIN RADC"/>
    <property type="match status" value="1"/>
</dbReference>
<dbReference type="PANTHER" id="PTHR30471:SF3">
    <property type="entry name" value="UPF0758 PROTEIN YEES-RELATED"/>
    <property type="match status" value="1"/>
</dbReference>
<dbReference type="Pfam" id="PF04002">
    <property type="entry name" value="RadC"/>
    <property type="match status" value="1"/>
</dbReference>
<dbReference type="Pfam" id="PF20582">
    <property type="entry name" value="UPF0758_N"/>
    <property type="match status" value="1"/>
</dbReference>
<dbReference type="SUPFAM" id="SSF47781">
    <property type="entry name" value="RuvA domain 2-like"/>
    <property type="match status" value="1"/>
</dbReference>
<dbReference type="PROSITE" id="PS50249">
    <property type="entry name" value="MPN"/>
    <property type="match status" value="1"/>
</dbReference>
<dbReference type="PROSITE" id="PS01302">
    <property type="entry name" value="UPF0758"/>
    <property type="match status" value="1"/>
</dbReference>
<protein>
    <recommendedName>
        <fullName>UPF0758 protein lpg2489</fullName>
    </recommendedName>
</protein>
<comment type="similarity">
    <text evidence="2">Belongs to the UPF0758 family.</text>
</comment>
<sequence>MMVAHTAQQLDLREKLLTNGVHSLSDIELLAVFISSGNNKKSCLQLAYELTKHLGNLRNILNADLQSFKSIHGLGEVRYAQLQAAKEICHRSDFIHLQKEIRLSNTQQTYAFLKKRLRDYKNETFAALFLDNQHRIIAYEELFSGTINTATVYPRPIVERVLQLNAAALILAHNHPSGLSDASQQDLAITERIRDALDLVDARLLDHIVIGDNEVYSIFAENKWVCN</sequence>
<reference key="1">
    <citation type="journal article" date="2004" name="Science">
        <title>The genomic sequence of the accidental pathogen Legionella pneumophila.</title>
        <authorList>
            <person name="Chien M."/>
            <person name="Morozova I."/>
            <person name="Shi S."/>
            <person name="Sheng H."/>
            <person name="Chen J."/>
            <person name="Gomez S.M."/>
            <person name="Asamani G."/>
            <person name="Hill K."/>
            <person name="Nuara J."/>
            <person name="Feder M."/>
            <person name="Rineer J."/>
            <person name="Greenberg J.J."/>
            <person name="Steshenko V."/>
            <person name="Park S.H."/>
            <person name="Zhao B."/>
            <person name="Teplitskaya E."/>
            <person name="Edwards J.R."/>
            <person name="Pampou S."/>
            <person name="Georghiou A."/>
            <person name="Chou I.-C."/>
            <person name="Iannuccilli W."/>
            <person name="Ulz M.E."/>
            <person name="Kim D.H."/>
            <person name="Geringer-Sameth A."/>
            <person name="Goldsberry C."/>
            <person name="Morozov P."/>
            <person name="Fischer S.G."/>
            <person name="Segal G."/>
            <person name="Qu X."/>
            <person name="Rzhetsky A."/>
            <person name="Zhang P."/>
            <person name="Cayanis E."/>
            <person name="De Jong P.J."/>
            <person name="Ju J."/>
            <person name="Kalachikov S."/>
            <person name="Shuman H.A."/>
            <person name="Russo J.J."/>
        </authorList>
    </citation>
    <scope>NUCLEOTIDE SEQUENCE [LARGE SCALE GENOMIC DNA]</scope>
    <source>
        <strain>Philadelphia 1 / ATCC 33152 / DSM 7513</strain>
    </source>
</reference>
<feature type="chain" id="PRO_1000089821" description="UPF0758 protein lpg2489">
    <location>
        <begin position="1"/>
        <end position="227"/>
    </location>
</feature>
<feature type="domain" description="MPN" evidence="1">
    <location>
        <begin position="102"/>
        <end position="225"/>
    </location>
</feature>
<feature type="short sequence motif" description="JAMM motif" evidence="1">
    <location>
        <begin position="173"/>
        <end position="186"/>
    </location>
</feature>
<feature type="binding site" evidence="1">
    <location>
        <position position="173"/>
    </location>
    <ligand>
        <name>Zn(2+)</name>
        <dbReference type="ChEBI" id="CHEBI:29105"/>
        <note>catalytic</note>
    </ligand>
</feature>
<feature type="binding site" evidence="1">
    <location>
        <position position="175"/>
    </location>
    <ligand>
        <name>Zn(2+)</name>
        <dbReference type="ChEBI" id="CHEBI:29105"/>
        <note>catalytic</note>
    </ligand>
</feature>
<feature type="binding site" evidence="1">
    <location>
        <position position="186"/>
    </location>
    <ligand>
        <name>Zn(2+)</name>
        <dbReference type="ChEBI" id="CHEBI:29105"/>
        <note>catalytic</note>
    </ligand>
</feature>
<proteinExistence type="inferred from homology"/>